<keyword id="KW-0028">Amino-acid biosynthesis</keyword>
<keyword id="KW-0100">Branched-chain amino acid biosynthesis</keyword>
<keyword id="KW-0963">Cytoplasm</keyword>
<keyword id="KW-0432">Leucine biosynthesis</keyword>
<keyword id="KW-0460">Magnesium</keyword>
<keyword id="KW-0464">Manganese</keyword>
<keyword id="KW-0479">Metal-binding</keyword>
<keyword id="KW-0520">NAD</keyword>
<keyword id="KW-0560">Oxidoreductase</keyword>
<proteinExistence type="inferred from homology"/>
<gene>
    <name evidence="1" type="primary">leuB</name>
    <name type="ordered locus">NMA1456</name>
</gene>
<reference key="1">
    <citation type="journal article" date="2000" name="Nature">
        <title>Complete DNA sequence of a serogroup A strain of Neisseria meningitidis Z2491.</title>
        <authorList>
            <person name="Parkhill J."/>
            <person name="Achtman M."/>
            <person name="James K.D."/>
            <person name="Bentley S.D."/>
            <person name="Churcher C.M."/>
            <person name="Klee S.R."/>
            <person name="Morelli G."/>
            <person name="Basham D."/>
            <person name="Brown D."/>
            <person name="Chillingworth T."/>
            <person name="Davies R.M."/>
            <person name="Davis P."/>
            <person name="Devlin K."/>
            <person name="Feltwell T."/>
            <person name="Hamlin N."/>
            <person name="Holroyd S."/>
            <person name="Jagels K."/>
            <person name="Leather S."/>
            <person name="Moule S."/>
            <person name="Mungall K.L."/>
            <person name="Quail M.A."/>
            <person name="Rajandream M.A."/>
            <person name="Rutherford K.M."/>
            <person name="Simmonds M."/>
            <person name="Skelton J."/>
            <person name="Whitehead S."/>
            <person name="Spratt B.G."/>
            <person name="Barrell B.G."/>
        </authorList>
    </citation>
    <scope>NUCLEOTIDE SEQUENCE [LARGE SCALE GENOMIC DNA]</scope>
    <source>
        <strain>DSM 15465 / Z2491</strain>
    </source>
</reference>
<organism>
    <name type="scientific">Neisseria meningitidis serogroup A / serotype 4A (strain DSM 15465 / Z2491)</name>
    <dbReference type="NCBI Taxonomy" id="122587"/>
    <lineage>
        <taxon>Bacteria</taxon>
        <taxon>Pseudomonadati</taxon>
        <taxon>Pseudomonadota</taxon>
        <taxon>Betaproteobacteria</taxon>
        <taxon>Neisseriales</taxon>
        <taxon>Neisseriaceae</taxon>
        <taxon>Neisseria</taxon>
    </lineage>
</organism>
<dbReference type="EC" id="1.1.1.85" evidence="1"/>
<dbReference type="EMBL" id="AL157959">
    <property type="protein sequence ID" value="CAM08613.1"/>
    <property type="molecule type" value="Genomic_DNA"/>
</dbReference>
<dbReference type="PIR" id="E81836">
    <property type="entry name" value="E81836"/>
</dbReference>
<dbReference type="RefSeq" id="WP_002246953.1">
    <property type="nucleotide sequence ID" value="NC_003116.1"/>
</dbReference>
<dbReference type="SMR" id="Q9JU79"/>
<dbReference type="EnsemblBacteria" id="CAM08613">
    <property type="protein sequence ID" value="CAM08613"/>
    <property type="gene ID" value="NMA1456"/>
</dbReference>
<dbReference type="KEGG" id="nma:NMA1456"/>
<dbReference type="HOGENOM" id="CLU_031953_0_3_4"/>
<dbReference type="UniPathway" id="UPA00048">
    <property type="reaction ID" value="UER00072"/>
</dbReference>
<dbReference type="Proteomes" id="UP000000626">
    <property type="component" value="Chromosome"/>
</dbReference>
<dbReference type="GO" id="GO:0005829">
    <property type="term" value="C:cytosol"/>
    <property type="evidence" value="ECO:0007669"/>
    <property type="project" value="TreeGrafter"/>
</dbReference>
<dbReference type="GO" id="GO:0003862">
    <property type="term" value="F:3-isopropylmalate dehydrogenase activity"/>
    <property type="evidence" value="ECO:0007669"/>
    <property type="project" value="UniProtKB-UniRule"/>
</dbReference>
<dbReference type="GO" id="GO:0000287">
    <property type="term" value="F:magnesium ion binding"/>
    <property type="evidence" value="ECO:0007669"/>
    <property type="project" value="InterPro"/>
</dbReference>
<dbReference type="GO" id="GO:0051287">
    <property type="term" value="F:NAD binding"/>
    <property type="evidence" value="ECO:0007669"/>
    <property type="project" value="InterPro"/>
</dbReference>
<dbReference type="GO" id="GO:0009098">
    <property type="term" value="P:L-leucine biosynthetic process"/>
    <property type="evidence" value="ECO:0007669"/>
    <property type="project" value="UniProtKB-UniRule"/>
</dbReference>
<dbReference type="FunFam" id="3.40.718.10:FF:000004">
    <property type="entry name" value="3-isopropylmalate dehydrogenase"/>
    <property type="match status" value="1"/>
</dbReference>
<dbReference type="Gene3D" id="3.40.718.10">
    <property type="entry name" value="Isopropylmalate Dehydrogenase"/>
    <property type="match status" value="1"/>
</dbReference>
<dbReference type="HAMAP" id="MF_01033">
    <property type="entry name" value="LeuB_type1"/>
    <property type="match status" value="1"/>
</dbReference>
<dbReference type="InterPro" id="IPR019818">
    <property type="entry name" value="IsoCit/isopropylmalate_DH_CS"/>
</dbReference>
<dbReference type="InterPro" id="IPR024084">
    <property type="entry name" value="IsoPropMal-DH-like_dom"/>
</dbReference>
<dbReference type="InterPro" id="IPR004429">
    <property type="entry name" value="Isopropylmalate_DH"/>
</dbReference>
<dbReference type="NCBIfam" id="TIGR00169">
    <property type="entry name" value="leuB"/>
    <property type="match status" value="1"/>
</dbReference>
<dbReference type="PANTHER" id="PTHR42979">
    <property type="entry name" value="3-ISOPROPYLMALATE DEHYDROGENASE"/>
    <property type="match status" value="1"/>
</dbReference>
<dbReference type="PANTHER" id="PTHR42979:SF1">
    <property type="entry name" value="3-ISOPROPYLMALATE DEHYDROGENASE"/>
    <property type="match status" value="1"/>
</dbReference>
<dbReference type="Pfam" id="PF00180">
    <property type="entry name" value="Iso_dh"/>
    <property type="match status" value="1"/>
</dbReference>
<dbReference type="SMART" id="SM01329">
    <property type="entry name" value="Iso_dh"/>
    <property type="match status" value="1"/>
</dbReference>
<dbReference type="SUPFAM" id="SSF53659">
    <property type="entry name" value="Isocitrate/Isopropylmalate dehydrogenase-like"/>
    <property type="match status" value="1"/>
</dbReference>
<dbReference type="PROSITE" id="PS00470">
    <property type="entry name" value="IDH_IMDH"/>
    <property type="match status" value="1"/>
</dbReference>
<evidence type="ECO:0000255" key="1">
    <source>
        <dbReference type="HAMAP-Rule" id="MF_01033"/>
    </source>
</evidence>
<comment type="function">
    <text evidence="1">Catalyzes the oxidation of 3-carboxy-2-hydroxy-4-methylpentanoate (3-isopropylmalate) to 3-carboxy-4-methyl-2-oxopentanoate. The product decarboxylates to 4-methyl-2 oxopentanoate.</text>
</comment>
<comment type="catalytic activity">
    <reaction evidence="1">
        <text>(2R,3S)-3-isopropylmalate + NAD(+) = 4-methyl-2-oxopentanoate + CO2 + NADH</text>
        <dbReference type="Rhea" id="RHEA:32271"/>
        <dbReference type="ChEBI" id="CHEBI:16526"/>
        <dbReference type="ChEBI" id="CHEBI:17865"/>
        <dbReference type="ChEBI" id="CHEBI:35121"/>
        <dbReference type="ChEBI" id="CHEBI:57540"/>
        <dbReference type="ChEBI" id="CHEBI:57945"/>
        <dbReference type="EC" id="1.1.1.85"/>
    </reaction>
</comment>
<comment type="cofactor">
    <cofactor evidence="1">
        <name>Mg(2+)</name>
        <dbReference type="ChEBI" id="CHEBI:18420"/>
    </cofactor>
    <cofactor evidence="1">
        <name>Mn(2+)</name>
        <dbReference type="ChEBI" id="CHEBI:29035"/>
    </cofactor>
    <text evidence="1">Binds 1 Mg(2+) or Mn(2+) ion per subunit.</text>
</comment>
<comment type="pathway">
    <text evidence="1">Amino-acid biosynthesis; L-leucine biosynthesis; L-leucine from 3-methyl-2-oxobutanoate: step 3/4.</text>
</comment>
<comment type="subunit">
    <text evidence="1">Homodimer.</text>
</comment>
<comment type="subcellular location">
    <subcellularLocation>
        <location evidence="1">Cytoplasm</location>
    </subcellularLocation>
</comment>
<comment type="similarity">
    <text evidence="1">Belongs to the isocitrate and isopropylmalate dehydrogenases family. LeuB type 1 subfamily.</text>
</comment>
<protein>
    <recommendedName>
        <fullName evidence="1">3-isopropylmalate dehydrogenase</fullName>
        <ecNumber evidence="1">1.1.1.85</ecNumber>
    </recommendedName>
    <alternativeName>
        <fullName evidence="1">3-IPM-DH</fullName>
    </alternativeName>
    <alternativeName>
        <fullName evidence="1">Beta-IPM dehydrogenase</fullName>
        <shortName evidence="1">IMDH</shortName>
    </alternativeName>
</protein>
<accession>Q9JU79</accession>
<accession>A1IS59</accession>
<name>LEU3_NEIMA</name>
<sequence>MTKHIAILRGDGIGPEIVAETVRVLDKLIAQGLDVGYEYAPLGGEAYDEYGHPYPEFTQNLCRKADAVLLGAVGSPQYDNLDRPLRPERGLLAIRKDLNLFANLRPAILYPELANASTLKSEIVAGLDILIVRELTGDIYFGEPRGIRVLENGEREGYNTMKYSESEIRRIAHVAFQSAQKRSKKVCSVGKANVLETTELWREIFEEIGKEYPDVELSHMYVDNAAMQLVRAPKQFDVIATGNIFGDILSDEASMLTGSIGMLPSASLDENGKGLYEPSHGSAPDIAGQNKANPLATVLSLAMLLRYSLNDEARAQQVENAVQKVLQQGLRTGDIYEEGTKLVSCSEMGDAVLATL</sequence>
<feature type="chain" id="PRO_0000083711" description="3-isopropylmalate dehydrogenase">
    <location>
        <begin position="1"/>
        <end position="356"/>
    </location>
</feature>
<feature type="binding site" evidence="1">
    <location>
        <position position="95"/>
    </location>
    <ligand>
        <name>substrate</name>
    </ligand>
</feature>
<feature type="binding site" evidence="1">
    <location>
        <position position="105"/>
    </location>
    <ligand>
        <name>substrate</name>
    </ligand>
</feature>
<feature type="binding site" evidence="1">
    <location>
        <position position="133"/>
    </location>
    <ligand>
        <name>substrate</name>
    </ligand>
</feature>
<feature type="binding site" evidence="1">
    <location>
        <position position="223"/>
    </location>
    <ligand>
        <name>Mg(2+)</name>
        <dbReference type="ChEBI" id="CHEBI:18420"/>
    </ligand>
</feature>
<feature type="binding site" evidence="1">
    <location>
        <position position="223"/>
    </location>
    <ligand>
        <name>substrate</name>
    </ligand>
</feature>
<feature type="binding site" evidence="1">
    <location>
        <position position="247"/>
    </location>
    <ligand>
        <name>Mg(2+)</name>
        <dbReference type="ChEBI" id="CHEBI:18420"/>
    </ligand>
</feature>
<feature type="binding site" evidence="1">
    <location>
        <position position="251"/>
    </location>
    <ligand>
        <name>Mg(2+)</name>
        <dbReference type="ChEBI" id="CHEBI:18420"/>
    </ligand>
</feature>
<feature type="binding site" evidence="1">
    <location>
        <begin position="281"/>
        <end position="293"/>
    </location>
    <ligand>
        <name>NAD(+)</name>
        <dbReference type="ChEBI" id="CHEBI:57540"/>
    </ligand>
</feature>
<feature type="site" description="Important for catalysis" evidence="1">
    <location>
        <position position="140"/>
    </location>
</feature>
<feature type="site" description="Important for catalysis" evidence="1">
    <location>
        <position position="191"/>
    </location>
</feature>